<proteinExistence type="inferred from homology"/>
<name>ATPB_PECCP</name>
<evidence type="ECO:0000255" key="1">
    <source>
        <dbReference type="HAMAP-Rule" id="MF_01347"/>
    </source>
</evidence>
<reference key="1">
    <citation type="submission" date="2009-07" db="EMBL/GenBank/DDBJ databases">
        <title>Complete sequence of Pectobacterium carotovorum subsp. carotovorum PC1.</title>
        <authorList>
            <consortium name="US DOE Joint Genome Institute"/>
            <person name="Lucas S."/>
            <person name="Copeland A."/>
            <person name="Lapidus A."/>
            <person name="Glavina del Rio T."/>
            <person name="Tice H."/>
            <person name="Bruce D."/>
            <person name="Goodwin L."/>
            <person name="Pitluck S."/>
            <person name="Munk A.C."/>
            <person name="Brettin T."/>
            <person name="Detter J.C."/>
            <person name="Han C."/>
            <person name="Tapia R."/>
            <person name="Larimer F."/>
            <person name="Land M."/>
            <person name="Hauser L."/>
            <person name="Kyrpides N."/>
            <person name="Mikhailova N."/>
            <person name="Balakrishnan V."/>
            <person name="Glasner J."/>
            <person name="Perna N.T."/>
        </authorList>
    </citation>
    <scope>NUCLEOTIDE SEQUENCE [LARGE SCALE GENOMIC DNA]</scope>
    <source>
        <strain>PC1</strain>
    </source>
</reference>
<protein>
    <recommendedName>
        <fullName evidence="1">ATP synthase subunit beta</fullName>
        <ecNumber evidence="1">7.1.2.2</ecNumber>
    </recommendedName>
    <alternativeName>
        <fullName evidence="1">ATP synthase F1 sector subunit beta</fullName>
    </alternativeName>
    <alternativeName>
        <fullName evidence="1">F-ATPase subunit beta</fullName>
    </alternativeName>
</protein>
<dbReference type="EC" id="7.1.2.2" evidence="1"/>
<dbReference type="EMBL" id="CP001657">
    <property type="protein sequence ID" value="ACT15271.1"/>
    <property type="molecule type" value="Genomic_DNA"/>
</dbReference>
<dbReference type="RefSeq" id="WP_015842331.1">
    <property type="nucleotide sequence ID" value="NC_012917.1"/>
</dbReference>
<dbReference type="SMR" id="C6DJH2"/>
<dbReference type="STRING" id="561230.PC1_4257"/>
<dbReference type="GeneID" id="67796245"/>
<dbReference type="KEGG" id="pct:PC1_4257"/>
<dbReference type="eggNOG" id="COG0055">
    <property type="taxonomic scope" value="Bacteria"/>
</dbReference>
<dbReference type="HOGENOM" id="CLU_022398_0_2_6"/>
<dbReference type="OrthoDB" id="9801639at2"/>
<dbReference type="Proteomes" id="UP000002736">
    <property type="component" value="Chromosome"/>
</dbReference>
<dbReference type="GO" id="GO:0005886">
    <property type="term" value="C:plasma membrane"/>
    <property type="evidence" value="ECO:0007669"/>
    <property type="project" value="UniProtKB-SubCell"/>
</dbReference>
<dbReference type="GO" id="GO:0045259">
    <property type="term" value="C:proton-transporting ATP synthase complex"/>
    <property type="evidence" value="ECO:0007669"/>
    <property type="project" value="UniProtKB-KW"/>
</dbReference>
<dbReference type="GO" id="GO:0005524">
    <property type="term" value="F:ATP binding"/>
    <property type="evidence" value="ECO:0007669"/>
    <property type="project" value="UniProtKB-UniRule"/>
</dbReference>
<dbReference type="GO" id="GO:0016887">
    <property type="term" value="F:ATP hydrolysis activity"/>
    <property type="evidence" value="ECO:0007669"/>
    <property type="project" value="InterPro"/>
</dbReference>
<dbReference type="GO" id="GO:0046933">
    <property type="term" value="F:proton-transporting ATP synthase activity, rotational mechanism"/>
    <property type="evidence" value="ECO:0007669"/>
    <property type="project" value="UniProtKB-UniRule"/>
</dbReference>
<dbReference type="CDD" id="cd18110">
    <property type="entry name" value="ATP-synt_F1_beta_C"/>
    <property type="match status" value="1"/>
</dbReference>
<dbReference type="CDD" id="cd18115">
    <property type="entry name" value="ATP-synt_F1_beta_N"/>
    <property type="match status" value="1"/>
</dbReference>
<dbReference type="CDD" id="cd01133">
    <property type="entry name" value="F1-ATPase_beta_CD"/>
    <property type="match status" value="1"/>
</dbReference>
<dbReference type="FunFam" id="1.10.1140.10:FF:000001">
    <property type="entry name" value="ATP synthase subunit beta"/>
    <property type="match status" value="1"/>
</dbReference>
<dbReference type="FunFam" id="2.40.10.170:FF:000003">
    <property type="entry name" value="ATP synthase subunit beta"/>
    <property type="match status" value="1"/>
</dbReference>
<dbReference type="FunFam" id="3.40.50.300:FF:000004">
    <property type="entry name" value="ATP synthase subunit beta"/>
    <property type="match status" value="1"/>
</dbReference>
<dbReference type="Gene3D" id="2.40.10.170">
    <property type="match status" value="1"/>
</dbReference>
<dbReference type="Gene3D" id="1.10.1140.10">
    <property type="entry name" value="Bovine Mitochondrial F1-atpase, Atp Synthase Beta Chain, Chain D, domain 3"/>
    <property type="match status" value="1"/>
</dbReference>
<dbReference type="Gene3D" id="3.40.50.300">
    <property type="entry name" value="P-loop containing nucleotide triphosphate hydrolases"/>
    <property type="match status" value="1"/>
</dbReference>
<dbReference type="HAMAP" id="MF_01347">
    <property type="entry name" value="ATP_synth_beta_bact"/>
    <property type="match status" value="1"/>
</dbReference>
<dbReference type="InterPro" id="IPR003593">
    <property type="entry name" value="AAA+_ATPase"/>
</dbReference>
<dbReference type="InterPro" id="IPR055190">
    <property type="entry name" value="ATP-synt_VA_C"/>
</dbReference>
<dbReference type="InterPro" id="IPR005722">
    <property type="entry name" value="ATP_synth_F1_bsu"/>
</dbReference>
<dbReference type="InterPro" id="IPR020003">
    <property type="entry name" value="ATPase_a/bsu_AS"/>
</dbReference>
<dbReference type="InterPro" id="IPR050053">
    <property type="entry name" value="ATPase_alpha/beta_chains"/>
</dbReference>
<dbReference type="InterPro" id="IPR004100">
    <property type="entry name" value="ATPase_F1/V1/A1_a/bsu_N"/>
</dbReference>
<dbReference type="InterPro" id="IPR036121">
    <property type="entry name" value="ATPase_F1/V1/A1_a/bsu_N_sf"/>
</dbReference>
<dbReference type="InterPro" id="IPR000194">
    <property type="entry name" value="ATPase_F1/V1/A1_a/bsu_nucl-bd"/>
</dbReference>
<dbReference type="InterPro" id="IPR024034">
    <property type="entry name" value="ATPase_F1/V1_b/a_C"/>
</dbReference>
<dbReference type="InterPro" id="IPR027417">
    <property type="entry name" value="P-loop_NTPase"/>
</dbReference>
<dbReference type="NCBIfam" id="TIGR01039">
    <property type="entry name" value="atpD"/>
    <property type="match status" value="1"/>
</dbReference>
<dbReference type="PANTHER" id="PTHR15184">
    <property type="entry name" value="ATP SYNTHASE"/>
    <property type="match status" value="1"/>
</dbReference>
<dbReference type="PANTHER" id="PTHR15184:SF71">
    <property type="entry name" value="ATP SYNTHASE SUBUNIT BETA, MITOCHONDRIAL"/>
    <property type="match status" value="1"/>
</dbReference>
<dbReference type="Pfam" id="PF00006">
    <property type="entry name" value="ATP-synt_ab"/>
    <property type="match status" value="1"/>
</dbReference>
<dbReference type="Pfam" id="PF02874">
    <property type="entry name" value="ATP-synt_ab_N"/>
    <property type="match status" value="1"/>
</dbReference>
<dbReference type="Pfam" id="PF22919">
    <property type="entry name" value="ATP-synt_VA_C"/>
    <property type="match status" value="1"/>
</dbReference>
<dbReference type="SMART" id="SM00382">
    <property type="entry name" value="AAA"/>
    <property type="match status" value="1"/>
</dbReference>
<dbReference type="SUPFAM" id="SSF47917">
    <property type="entry name" value="C-terminal domain of alpha and beta subunits of F1 ATP synthase"/>
    <property type="match status" value="1"/>
</dbReference>
<dbReference type="SUPFAM" id="SSF50615">
    <property type="entry name" value="N-terminal domain of alpha and beta subunits of F1 ATP synthase"/>
    <property type="match status" value="1"/>
</dbReference>
<dbReference type="SUPFAM" id="SSF52540">
    <property type="entry name" value="P-loop containing nucleoside triphosphate hydrolases"/>
    <property type="match status" value="1"/>
</dbReference>
<dbReference type="PROSITE" id="PS00152">
    <property type="entry name" value="ATPASE_ALPHA_BETA"/>
    <property type="match status" value="1"/>
</dbReference>
<keyword id="KW-0066">ATP synthesis</keyword>
<keyword id="KW-0067">ATP-binding</keyword>
<keyword id="KW-0997">Cell inner membrane</keyword>
<keyword id="KW-1003">Cell membrane</keyword>
<keyword id="KW-0139">CF(1)</keyword>
<keyword id="KW-0375">Hydrogen ion transport</keyword>
<keyword id="KW-0406">Ion transport</keyword>
<keyword id="KW-0472">Membrane</keyword>
<keyword id="KW-0547">Nucleotide-binding</keyword>
<keyword id="KW-1278">Translocase</keyword>
<keyword id="KW-0813">Transport</keyword>
<gene>
    <name evidence="1" type="primary">atpD</name>
    <name type="ordered locus">PC1_4257</name>
</gene>
<comment type="function">
    <text evidence="1">Produces ATP from ADP in the presence of a proton gradient across the membrane. The catalytic sites are hosted primarily by the beta subunits.</text>
</comment>
<comment type="catalytic activity">
    <reaction evidence="1">
        <text>ATP + H2O + 4 H(+)(in) = ADP + phosphate + 5 H(+)(out)</text>
        <dbReference type="Rhea" id="RHEA:57720"/>
        <dbReference type="ChEBI" id="CHEBI:15377"/>
        <dbReference type="ChEBI" id="CHEBI:15378"/>
        <dbReference type="ChEBI" id="CHEBI:30616"/>
        <dbReference type="ChEBI" id="CHEBI:43474"/>
        <dbReference type="ChEBI" id="CHEBI:456216"/>
        <dbReference type="EC" id="7.1.2.2"/>
    </reaction>
</comment>
<comment type="subunit">
    <text evidence="1">F-type ATPases have 2 components, CF(1) - the catalytic core - and CF(0) - the membrane proton channel. CF(1) has five subunits: alpha(3), beta(3), gamma(1), delta(1), epsilon(1). CF(0) has three main subunits: a(1), b(2) and c(9-12). The alpha and beta chains form an alternating ring which encloses part of the gamma chain. CF(1) is attached to CF(0) by a central stalk formed by the gamma and epsilon chains, while a peripheral stalk is formed by the delta and b chains.</text>
</comment>
<comment type="subcellular location">
    <subcellularLocation>
        <location evidence="1">Cell inner membrane</location>
        <topology evidence="1">Peripheral membrane protein</topology>
    </subcellularLocation>
</comment>
<comment type="similarity">
    <text evidence="1">Belongs to the ATPase alpha/beta chains family.</text>
</comment>
<accession>C6DJH2</accession>
<organism>
    <name type="scientific">Pectobacterium carotovorum subsp. carotovorum (strain PC1)</name>
    <dbReference type="NCBI Taxonomy" id="561230"/>
    <lineage>
        <taxon>Bacteria</taxon>
        <taxon>Pseudomonadati</taxon>
        <taxon>Pseudomonadota</taxon>
        <taxon>Gammaproteobacteria</taxon>
        <taxon>Enterobacterales</taxon>
        <taxon>Pectobacteriaceae</taxon>
        <taxon>Pectobacterium</taxon>
    </lineage>
</organism>
<sequence length="460" mass="50225">MATGKIIQVIGAVVDVEFPQDAVPKVYDALEVENGAEKLVLEVQQQLGGGIVRCIAMGSSDGLRRGLNVNNLDHPIEVPVGKATLGRIMNVLGEPIDMKGDIGEEERWAIHRAAPSYEELSNSQELLETGIKVIDLMCPFAKGGKVGLFGGAGVGKTVNMMELIRNIAIEHSGYSVFAGVGERTREGNDFYHEMTDSNVIDKVSLVYGQMNEPPGNRLRVALTGLTMAEKFRDEGRDVLLFVDNIYRYTLAGTEVSALLGRMPSAVGYQPTLAEEMGVLQERITSTKTGSITSVQAVYVPADDLTDPSPATTFAHLDATVVLSRQIASLGIYPAVDPLDSTSRQLDPLVVGQEHYDVARGVQSILQRYQELKDIIAILGMDELSEEDKLVVSRARKIQRFLSQPFFVAEVFTGSPGKYVALKDTIRGFKGIMEGEYDHLPEQAFYMVGSIDEVVEKAKKL</sequence>
<feature type="chain" id="PRO_1000214828" description="ATP synthase subunit beta">
    <location>
        <begin position="1"/>
        <end position="460"/>
    </location>
</feature>
<feature type="binding site" evidence="1">
    <location>
        <begin position="150"/>
        <end position="157"/>
    </location>
    <ligand>
        <name>ATP</name>
        <dbReference type="ChEBI" id="CHEBI:30616"/>
    </ligand>
</feature>